<name>NUOH_ECO55</name>
<sequence>MSWISPELIEILLTILKAVVILLVVVTCGAFMSFGERRLLGLFQNRYGPNRVGWGGSLQLVADMIKMFFKEDWIPKFSDRVIFTLAPMIAFTSLLLAFAIVPVSPGWVVADLNIGILFFLMMAGLAVYAVLFAGWSSNNKYSLLGAMRASAQTLSYEVFLGLSLMGVVAQAGSFNMTDIVNSQAHVWNVIPQFFGFITFAIAGVAVCHRHPFDQPEAEQELADGYHIEYSGMKFGLFFVGEYIGIVTISALMVTLFFGGWQGPLLPPFIWFALKTAFFMMMFILIRASLPRPRYDQVMSFGWKICLPLTLINLLVTAAVILWQAQ</sequence>
<feature type="chain" id="PRO_1000166628" description="NADH-quinone oxidoreductase subunit H">
    <location>
        <begin position="1"/>
        <end position="325"/>
    </location>
</feature>
<feature type="transmembrane region" description="Helical" evidence="1">
    <location>
        <begin position="11"/>
        <end position="31"/>
    </location>
</feature>
<feature type="transmembrane region" description="Helical" evidence="1">
    <location>
        <begin position="81"/>
        <end position="101"/>
    </location>
</feature>
<feature type="transmembrane region" description="Helical" evidence="1">
    <location>
        <begin position="114"/>
        <end position="134"/>
    </location>
</feature>
<feature type="transmembrane region" description="Helical" evidence="1">
    <location>
        <begin position="154"/>
        <end position="174"/>
    </location>
</feature>
<feature type="transmembrane region" description="Helical" evidence="1">
    <location>
        <begin position="186"/>
        <end position="206"/>
    </location>
</feature>
<feature type="transmembrane region" description="Helical" evidence="1">
    <location>
        <begin position="237"/>
        <end position="257"/>
    </location>
</feature>
<feature type="transmembrane region" description="Helical" evidence="1">
    <location>
        <begin position="265"/>
        <end position="285"/>
    </location>
</feature>
<feature type="transmembrane region" description="Helical" evidence="1">
    <location>
        <begin position="304"/>
        <end position="324"/>
    </location>
</feature>
<evidence type="ECO:0000255" key="1">
    <source>
        <dbReference type="HAMAP-Rule" id="MF_01350"/>
    </source>
</evidence>
<accession>B7LAU4</accession>
<reference key="1">
    <citation type="journal article" date="2009" name="PLoS Genet.">
        <title>Organised genome dynamics in the Escherichia coli species results in highly diverse adaptive paths.</title>
        <authorList>
            <person name="Touchon M."/>
            <person name="Hoede C."/>
            <person name="Tenaillon O."/>
            <person name="Barbe V."/>
            <person name="Baeriswyl S."/>
            <person name="Bidet P."/>
            <person name="Bingen E."/>
            <person name="Bonacorsi S."/>
            <person name="Bouchier C."/>
            <person name="Bouvet O."/>
            <person name="Calteau A."/>
            <person name="Chiapello H."/>
            <person name="Clermont O."/>
            <person name="Cruveiller S."/>
            <person name="Danchin A."/>
            <person name="Diard M."/>
            <person name="Dossat C."/>
            <person name="Karoui M.E."/>
            <person name="Frapy E."/>
            <person name="Garry L."/>
            <person name="Ghigo J.M."/>
            <person name="Gilles A.M."/>
            <person name="Johnson J."/>
            <person name="Le Bouguenec C."/>
            <person name="Lescat M."/>
            <person name="Mangenot S."/>
            <person name="Martinez-Jehanne V."/>
            <person name="Matic I."/>
            <person name="Nassif X."/>
            <person name="Oztas S."/>
            <person name="Petit M.A."/>
            <person name="Pichon C."/>
            <person name="Rouy Z."/>
            <person name="Ruf C.S."/>
            <person name="Schneider D."/>
            <person name="Tourret J."/>
            <person name="Vacherie B."/>
            <person name="Vallenet D."/>
            <person name="Medigue C."/>
            <person name="Rocha E.P.C."/>
            <person name="Denamur E."/>
        </authorList>
    </citation>
    <scope>NUCLEOTIDE SEQUENCE [LARGE SCALE GENOMIC DNA]</scope>
    <source>
        <strain>55989 / EAEC</strain>
    </source>
</reference>
<keyword id="KW-0997">Cell inner membrane</keyword>
<keyword id="KW-1003">Cell membrane</keyword>
<keyword id="KW-0472">Membrane</keyword>
<keyword id="KW-0520">NAD</keyword>
<keyword id="KW-0874">Quinone</keyword>
<keyword id="KW-1185">Reference proteome</keyword>
<keyword id="KW-1278">Translocase</keyword>
<keyword id="KW-0812">Transmembrane</keyword>
<keyword id="KW-1133">Transmembrane helix</keyword>
<keyword id="KW-0830">Ubiquinone</keyword>
<organism>
    <name type="scientific">Escherichia coli (strain 55989 / EAEC)</name>
    <dbReference type="NCBI Taxonomy" id="585055"/>
    <lineage>
        <taxon>Bacteria</taxon>
        <taxon>Pseudomonadati</taxon>
        <taxon>Pseudomonadota</taxon>
        <taxon>Gammaproteobacteria</taxon>
        <taxon>Enterobacterales</taxon>
        <taxon>Enterobacteriaceae</taxon>
        <taxon>Escherichia</taxon>
    </lineage>
</organism>
<protein>
    <recommendedName>
        <fullName evidence="1">NADH-quinone oxidoreductase subunit H</fullName>
        <ecNumber evidence="1">7.1.1.-</ecNumber>
    </recommendedName>
    <alternativeName>
        <fullName evidence="1">NADH dehydrogenase I subunit H</fullName>
    </alternativeName>
    <alternativeName>
        <fullName evidence="1">NDH-1 subunit H</fullName>
    </alternativeName>
</protein>
<proteinExistence type="inferred from homology"/>
<gene>
    <name evidence="1" type="primary">nuoH</name>
    <name type="ordered locus">EC55989_2526</name>
</gene>
<comment type="function">
    <text evidence="1">NDH-1 shuttles electrons from NADH, via FMN and iron-sulfur (Fe-S) centers, to quinones in the respiratory chain. The immediate electron acceptor for the enzyme in this species is believed to be ubiquinone. Couples the redox reaction to proton translocation (for every two electrons transferred, four hydrogen ions are translocated across the cytoplasmic membrane), and thus conserves the redox energy in a proton gradient. This subunit may bind ubiquinone.</text>
</comment>
<comment type="catalytic activity">
    <reaction evidence="1">
        <text>a quinone + NADH + 5 H(+)(in) = a quinol + NAD(+) + 4 H(+)(out)</text>
        <dbReference type="Rhea" id="RHEA:57888"/>
        <dbReference type="ChEBI" id="CHEBI:15378"/>
        <dbReference type="ChEBI" id="CHEBI:24646"/>
        <dbReference type="ChEBI" id="CHEBI:57540"/>
        <dbReference type="ChEBI" id="CHEBI:57945"/>
        <dbReference type="ChEBI" id="CHEBI:132124"/>
    </reaction>
</comment>
<comment type="subunit">
    <text evidence="1">NDH-1 is composed of 13 different subunits. Subunits NuoA, H, J, K, L, M, N constitute the membrane sector of the complex.</text>
</comment>
<comment type="subcellular location">
    <subcellularLocation>
        <location evidence="1">Cell inner membrane</location>
        <topology evidence="1">Multi-pass membrane protein</topology>
    </subcellularLocation>
</comment>
<comment type="similarity">
    <text evidence="1">Belongs to the complex I subunit 1 family.</text>
</comment>
<dbReference type="EC" id="7.1.1.-" evidence="1"/>
<dbReference type="EMBL" id="CU928145">
    <property type="protein sequence ID" value="CAU98394.1"/>
    <property type="molecule type" value="Genomic_DNA"/>
</dbReference>
<dbReference type="RefSeq" id="WP_000118507.1">
    <property type="nucleotide sequence ID" value="NC_011748.1"/>
</dbReference>
<dbReference type="SMR" id="B7LAU4"/>
<dbReference type="GeneID" id="93774892"/>
<dbReference type="KEGG" id="eck:EC55989_2526"/>
<dbReference type="HOGENOM" id="CLU_015134_0_1_6"/>
<dbReference type="Proteomes" id="UP000000746">
    <property type="component" value="Chromosome"/>
</dbReference>
<dbReference type="GO" id="GO:0005886">
    <property type="term" value="C:plasma membrane"/>
    <property type="evidence" value="ECO:0007669"/>
    <property type="project" value="UniProtKB-SubCell"/>
</dbReference>
<dbReference type="GO" id="GO:0003954">
    <property type="term" value="F:NADH dehydrogenase activity"/>
    <property type="evidence" value="ECO:0007669"/>
    <property type="project" value="TreeGrafter"/>
</dbReference>
<dbReference type="GO" id="GO:0016655">
    <property type="term" value="F:oxidoreductase activity, acting on NAD(P)H, quinone or similar compound as acceptor"/>
    <property type="evidence" value="ECO:0007669"/>
    <property type="project" value="UniProtKB-UniRule"/>
</dbReference>
<dbReference type="GO" id="GO:0048038">
    <property type="term" value="F:quinone binding"/>
    <property type="evidence" value="ECO:0007669"/>
    <property type="project" value="UniProtKB-KW"/>
</dbReference>
<dbReference type="GO" id="GO:0009060">
    <property type="term" value="P:aerobic respiration"/>
    <property type="evidence" value="ECO:0007669"/>
    <property type="project" value="TreeGrafter"/>
</dbReference>
<dbReference type="HAMAP" id="MF_01350">
    <property type="entry name" value="NDH1_NuoH"/>
    <property type="match status" value="1"/>
</dbReference>
<dbReference type="InterPro" id="IPR001694">
    <property type="entry name" value="NADH_UbQ_OxRdtase_su1/FPO"/>
</dbReference>
<dbReference type="InterPro" id="IPR018086">
    <property type="entry name" value="NADH_UbQ_OxRdtase_su1_CS"/>
</dbReference>
<dbReference type="NCBIfam" id="NF004740">
    <property type="entry name" value="PRK06076.1-1"/>
    <property type="match status" value="1"/>
</dbReference>
<dbReference type="NCBIfam" id="NF004741">
    <property type="entry name" value="PRK06076.1-2"/>
    <property type="match status" value="1"/>
</dbReference>
<dbReference type="PANTHER" id="PTHR11432">
    <property type="entry name" value="NADH DEHYDROGENASE SUBUNIT 1"/>
    <property type="match status" value="1"/>
</dbReference>
<dbReference type="PANTHER" id="PTHR11432:SF3">
    <property type="entry name" value="NADH-UBIQUINONE OXIDOREDUCTASE CHAIN 1"/>
    <property type="match status" value="1"/>
</dbReference>
<dbReference type="Pfam" id="PF00146">
    <property type="entry name" value="NADHdh"/>
    <property type="match status" value="1"/>
</dbReference>
<dbReference type="PROSITE" id="PS00667">
    <property type="entry name" value="COMPLEX1_ND1_1"/>
    <property type="match status" value="1"/>
</dbReference>
<dbReference type="PROSITE" id="PS00668">
    <property type="entry name" value="COMPLEX1_ND1_2"/>
    <property type="match status" value="1"/>
</dbReference>